<feature type="initiator methionine" description="Removed" evidence="3">
    <location>
        <position position="1"/>
    </location>
</feature>
<feature type="chain" id="PRO_0000164060" description="Superoxide dismutase [Cu-Zn]">
    <location>
        <begin position="2"/>
        <end position="154"/>
    </location>
</feature>
<feature type="binding site" evidence="1">
    <location>
        <position position="47"/>
    </location>
    <ligand>
        <name>Cu cation</name>
        <dbReference type="ChEBI" id="CHEBI:23378"/>
        <note>catalytic</note>
    </ligand>
</feature>
<feature type="binding site" evidence="1">
    <location>
        <position position="49"/>
    </location>
    <ligand>
        <name>Cu cation</name>
        <dbReference type="ChEBI" id="CHEBI:23378"/>
        <note>catalytic</note>
    </ligand>
</feature>
<feature type="binding site" evidence="1">
    <location>
        <position position="64"/>
    </location>
    <ligand>
        <name>Cu cation</name>
        <dbReference type="ChEBI" id="CHEBI:23378"/>
        <note>catalytic</note>
    </ligand>
</feature>
<feature type="binding site" evidence="1">
    <location>
        <position position="64"/>
    </location>
    <ligand>
        <name>Zn(2+)</name>
        <dbReference type="ChEBI" id="CHEBI:29105"/>
        <note>structural</note>
    </ligand>
</feature>
<feature type="binding site" evidence="1">
    <location>
        <position position="72"/>
    </location>
    <ligand>
        <name>Zn(2+)</name>
        <dbReference type="ChEBI" id="CHEBI:29105"/>
        <note>structural</note>
    </ligand>
</feature>
<feature type="binding site" evidence="1">
    <location>
        <position position="81"/>
    </location>
    <ligand>
        <name>Zn(2+)</name>
        <dbReference type="ChEBI" id="CHEBI:29105"/>
        <note>structural</note>
    </ligand>
</feature>
<feature type="binding site" evidence="1">
    <location>
        <position position="84"/>
    </location>
    <ligand>
        <name>Zn(2+)</name>
        <dbReference type="ChEBI" id="CHEBI:29105"/>
        <note>structural</note>
    </ligand>
</feature>
<feature type="binding site" evidence="1">
    <location>
        <position position="121"/>
    </location>
    <ligand>
        <name>Cu cation</name>
        <dbReference type="ChEBI" id="CHEBI:23378"/>
        <note>catalytic</note>
    </ligand>
</feature>
<feature type="modified residue" description="N-acetylalanine" evidence="3">
    <location>
        <position position="2"/>
    </location>
</feature>
<feature type="modified residue" description="N6-succinyllysine" evidence="5">
    <location>
        <position position="4"/>
    </location>
</feature>
<feature type="modified residue" description="N6-succinyllysine" evidence="5">
    <location>
        <position position="10"/>
    </location>
</feature>
<feature type="modified residue" description="N6-succinyllysine" evidence="5">
    <location>
        <position position="92"/>
    </location>
</feature>
<feature type="modified residue" description="Phosphoserine" evidence="2">
    <location>
        <position position="99"/>
    </location>
</feature>
<feature type="modified residue" description="Phosphoserine" evidence="2">
    <location>
        <position position="103"/>
    </location>
</feature>
<feature type="modified residue" description="Phosphoserine" evidence="4">
    <location>
        <position position="106"/>
    </location>
</feature>
<feature type="modified residue" description="Phosphoserine" evidence="5">
    <location>
        <position position="108"/>
    </location>
</feature>
<feature type="modified residue" description="N6-acetyllysine; alternate" evidence="2">
    <location>
        <position position="123"/>
    </location>
</feature>
<feature type="modified residue" description="N6-succinyllysine; alternate" evidence="2">
    <location>
        <position position="123"/>
    </location>
</feature>
<feature type="modified residue" description="N6-acetyllysine; alternate" evidence="5">
    <location>
        <position position="137"/>
    </location>
</feature>
<feature type="modified residue" description="N6-succinyllysine; alternate" evidence="5">
    <location>
        <position position="137"/>
    </location>
</feature>
<feature type="lipid moiety-binding region" description="S-palmitoyl cysteine" evidence="1">
    <location>
        <position position="7"/>
    </location>
</feature>
<feature type="disulfide bond" evidence="1">
    <location>
        <begin position="58"/>
        <end position="147"/>
    </location>
</feature>
<accession>Q8HXQ2</accession>
<proteinExistence type="evidence at transcript level"/>
<reference key="1">
    <citation type="journal article" date="2002" name="Gene">
        <title>Structure, molecular evolution, and gene expression of primate superoxide dismutases.</title>
        <authorList>
            <person name="Fukuhara R."/>
            <person name="Tezuka T."/>
            <person name="Kageyama T."/>
        </authorList>
    </citation>
    <scope>NUCLEOTIDE SEQUENCE [MRNA]</scope>
</reference>
<dbReference type="EC" id="1.15.1.1" evidence="2"/>
<dbReference type="EMBL" id="AB087269">
    <property type="protein sequence ID" value="BAC20348.1"/>
    <property type="molecule type" value="mRNA"/>
</dbReference>
<dbReference type="SMR" id="Q8HXQ2"/>
<dbReference type="GO" id="GO:0005737">
    <property type="term" value="C:cytoplasm"/>
    <property type="evidence" value="ECO:0000250"/>
    <property type="project" value="UniProtKB"/>
</dbReference>
<dbReference type="GO" id="GO:0031410">
    <property type="term" value="C:cytoplasmic vesicle"/>
    <property type="evidence" value="ECO:0000250"/>
    <property type="project" value="UniProtKB"/>
</dbReference>
<dbReference type="GO" id="GO:0005829">
    <property type="term" value="C:cytosol"/>
    <property type="evidence" value="ECO:0000250"/>
    <property type="project" value="UniProtKB"/>
</dbReference>
<dbReference type="GO" id="GO:0032839">
    <property type="term" value="C:dendrite cytoplasm"/>
    <property type="evidence" value="ECO:0000250"/>
    <property type="project" value="UniProtKB"/>
</dbReference>
<dbReference type="GO" id="GO:0005739">
    <property type="term" value="C:mitochondrion"/>
    <property type="evidence" value="ECO:0000250"/>
    <property type="project" value="UniProtKB"/>
</dbReference>
<dbReference type="GO" id="GO:0043025">
    <property type="term" value="C:neuronal cell body"/>
    <property type="evidence" value="ECO:0000250"/>
    <property type="project" value="UniProtKB"/>
</dbReference>
<dbReference type="GO" id="GO:0005634">
    <property type="term" value="C:nucleus"/>
    <property type="evidence" value="ECO:0000250"/>
    <property type="project" value="UniProtKB"/>
</dbReference>
<dbReference type="GO" id="GO:0032991">
    <property type="term" value="C:protein-containing complex"/>
    <property type="evidence" value="ECO:0000250"/>
    <property type="project" value="UniProtKB"/>
</dbReference>
<dbReference type="GO" id="GO:0005507">
    <property type="term" value="F:copper ion binding"/>
    <property type="evidence" value="ECO:0000250"/>
    <property type="project" value="UniProtKB"/>
</dbReference>
<dbReference type="GO" id="GO:0030346">
    <property type="term" value="F:protein phosphatase 2B binding"/>
    <property type="evidence" value="ECO:0000250"/>
    <property type="project" value="UniProtKB"/>
</dbReference>
<dbReference type="GO" id="GO:0051087">
    <property type="term" value="F:protein-folding chaperone binding"/>
    <property type="evidence" value="ECO:0000250"/>
    <property type="project" value="UniProtKB"/>
</dbReference>
<dbReference type="GO" id="GO:0004784">
    <property type="term" value="F:superoxide dismutase activity"/>
    <property type="evidence" value="ECO:0000250"/>
    <property type="project" value="UniProtKB"/>
</dbReference>
<dbReference type="GO" id="GO:0008270">
    <property type="term" value="F:zinc ion binding"/>
    <property type="evidence" value="ECO:0000250"/>
    <property type="project" value="UniProtKB"/>
</dbReference>
<dbReference type="GO" id="GO:0060088">
    <property type="term" value="P:auditory receptor cell stereocilium organization"/>
    <property type="evidence" value="ECO:0000250"/>
    <property type="project" value="UniProtKB"/>
</dbReference>
<dbReference type="GO" id="GO:0007566">
    <property type="term" value="P:embryo implantation"/>
    <property type="evidence" value="ECO:0000250"/>
    <property type="project" value="UniProtKB"/>
</dbReference>
<dbReference type="GO" id="GO:0006749">
    <property type="term" value="P:glutathione metabolic process"/>
    <property type="evidence" value="ECO:0000250"/>
    <property type="project" value="UniProtKB"/>
</dbReference>
<dbReference type="GO" id="GO:0060047">
    <property type="term" value="P:heart contraction"/>
    <property type="evidence" value="ECO:0000250"/>
    <property type="project" value="UniProtKB"/>
</dbReference>
<dbReference type="GO" id="GO:0050665">
    <property type="term" value="P:hydrogen peroxide biosynthetic process"/>
    <property type="evidence" value="ECO:0000250"/>
    <property type="project" value="UniProtKB"/>
</dbReference>
<dbReference type="GO" id="GO:0006879">
    <property type="term" value="P:intracellular iron ion homeostasis"/>
    <property type="evidence" value="ECO:0000250"/>
    <property type="project" value="UniProtKB"/>
</dbReference>
<dbReference type="GO" id="GO:0007626">
    <property type="term" value="P:locomotory behavior"/>
    <property type="evidence" value="ECO:0000250"/>
    <property type="project" value="UniProtKB"/>
</dbReference>
<dbReference type="GO" id="GO:0046716">
    <property type="term" value="P:muscle cell cellular homeostasis"/>
    <property type="evidence" value="ECO:0000250"/>
    <property type="project" value="UniProtKB"/>
</dbReference>
<dbReference type="GO" id="GO:0002262">
    <property type="term" value="P:myeloid cell homeostasis"/>
    <property type="evidence" value="ECO:0000250"/>
    <property type="project" value="UniProtKB"/>
</dbReference>
<dbReference type="GO" id="GO:0043524">
    <property type="term" value="P:negative regulation of neuron apoptotic process"/>
    <property type="evidence" value="ECO:0000250"/>
    <property type="project" value="UniProtKB"/>
</dbReference>
<dbReference type="GO" id="GO:0060052">
    <property type="term" value="P:neurofilament cytoskeleton organization"/>
    <property type="evidence" value="ECO:0000250"/>
    <property type="project" value="UniProtKB"/>
</dbReference>
<dbReference type="GO" id="GO:0001541">
    <property type="term" value="P:ovarian follicle development"/>
    <property type="evidence" value="ECO:0000250"/>
    <property type="project" value="UniProtKB"/>
</dbReference>
<dbReference type="GO" id="GO:0032287">
    <property type="term" value="P:peripheral nervous system myelin maintenance"/>
    <property type="evidence" value="ECO:0000250"/>
    <property type="project" value="UniProtKB"/>
</dbReference>
<dbReference type="GO" id="GO:0001819">
    <property type="term" value="P:positive regulation of cytokine production"/>
    <property type="evidence" value="ECO:0000250"/>
    <property type="project" value="UniProtKB"/>
</dbReference>
<dbReference type="GO" id="GO:0043410">
    <property type="term" value="P:positive regulation of MAPK cascade"/>
    <property type="evidence" value="ECO:0000250"/>
    <property type="project" value="UniProtKB"/>
</dbReference>
<dbReference type="GO" id="GO:0072593">
    <property type="term" value="P:reactive oxygen species metabolic process"/>
    <property type="evidence" value="ECO:0000250"/>
    <property type="project" value="UniProtKB"/>
</dbReference>
<dbReference type="GO" id="GO:0008217">
    <property type="term" value="P:regulation of blood pressure"/>
    <property type="evidence" value="ECO:0000250"/>
    <property type="project" value="UniProtKB"/>
</dbReference>
<dbReference type="GO" id="GO:0051881">
    <property type="term" value="P:regulation of mitochondrial membrane potential"/>
    <property type="evidence" value="ECO:0000250"/>
    <property type="project" value="UniProtKB"/>
</dbReference>
<dbReference type="GO" id="GO:0040014">
    <property type="term" value="P:regulation of multicellular organism growth"/>
    <property type="evidence" value="ECO:0000250"/>
    <property type="project" value="UniProtKB"/>
</dbReference>
<dbReference type="GO" id="GO:0060087">
    <property type="term" value="P:relaxation of vascular associated smooth muscle"/>
    <property type="evidence" value="ECO:0000250"/>
    <property type="project" value="UniProtKB"/>
</dbReference>
<dbReference type="GO" id="GO:0019430">
    <property type="term" value="P:removal of superoxide radicals"/>
    <property type="evidence" value="ECO:0000250"/>
    <property type="project" value="UniProtKB"/>
</dbReference>
<dbReference type="GO" id="GO:0048678">
    <property type="term" value="P:response to axon injury"/>
    <property type="evidence" value="ECO:0000250"/>
    <property type="project" value="UniProtKB"/>
</dbReference>
<dbReference type="GO" id="GO:0045471">
    <property type="term" value="P:response to ethanol"/>
    <property type="evidence" value="ECO:0000250"/>
    <property type="project" value="UniProtKB"/>
</dbReference>
<dbReference type="GO" id="GO:0009408">
    <property type="term" value="P:response to heat"/>
    <property type="evidence" value="ECO:0000250"/>
    <property type="project" value="UniProtKB"/>
</dbReference>
<dbReference type="GO" id="GO:0042542">
    <property type="term" value="P:response to hydrogen peroxide"/>
    <property type="evidence" value="ECO:0000250"/>
    <property type="project" value="UniProtKB"/>
</dbReference>
<dbReference type="GO" id="GO:0000303">
    <property type="term" value="P:response to superoxide"/>
    <property type="evidence" value="ECO:0000250"/>
    <property type="project" value="UniProtKB"/>
</dbReference>
<dbReference type="GO" id="GO:0001895">
    <property type="term" value="P:retina homeostasis"/>
    <property type="evidence" value="ECO:0000250"/>
    <property type="project" value="UniProtKB"/>
</dbReference>
<dbReference type="GO" id="GO:0007605">
    <property type="term" value="P:sensory perception of sound"/>
    <property type="evidence" value="ECO:0000250"/>
    <property type="project" value="UniProtKB"/>
</dbReference>
<dbReference type="GO" id="GO:0007283">
    <property type="term" value="P:spermatogenesis"/>
    <property type="evidence" value="ECO:0000250"/>
    <property type="project" value="UniProtKB"/>
</dbReference>
<dbReference type="GO" id="GO:0006801">
    <property type="term" value="P:superoxide metabolic process"/>
    <property type="evidence" value="ECO:0000250"/>
    <property type="project" value="UniProtKB"/>
</dbReference>
<dbReference type="GO" id="GO:0019226">
    <property type="term" value="P:transmission of nerve impulse"/>
    <property type="evidence" value="ECO:0000250"/>
    <property type="project" value="UniProtKB"/>
</dbReference>
<dbReference type="CDD" id="cd00305">
    <property type="entry name" value="Cu-Zn_Superoxide_Dismutase"/>
    <property type="match status" value="1"/>
</dbReference>
<dbReference type="FunFam" id="2.60.40.200:FF:000001">
    <property type="entry name" value="Superoxide dismutase [Cu-Zn]"/>
    <property type="match status" value="1"/>
</dbReference>
<dbReference type="Gene3D" id="2.60.40.200">
    <property type="entry name" value="Superoxide dismutase, copper/zinc binding domain"/>
    <property type="match status" value="1"/>
</dbReference>
<dbReference type="InterPro" id="IPR036423">
    <property type="entry name" value="SOD-like_Cu/Zn_dom_sf"/>
</dbReference>
<dbReference type="InterPro" id="IPR024134">
    <property type="entry name" value="SOD_Cu/Zn_/chaperone"/>
</dbReference>
<dbReference type="InterPro" id="IPR018152">
    <property type="entry name" value="SOD_Cu/Zn_BS"/>
</dbReference>
<dbReference type="InterPro" id="IPR001424">
    <property type="entry name" value="SOD_Cu_Zn_dom"/>
</dbReference>
<dbReference type="PANTHER" id="PTHR10003">
    <property type="entry name" value="SUPEROXIDE DISMUTASE CU-ZN -RELATED"/>
    <property type="match status" value="1"/>
</dbReference>
<dbReference type="Pfam" id="PF00080">
    <property type="entry name" value="Sod_Cu"/>
    <property type="match status" value="1"/>
</dbReference>
<dbReference type="PRINTS" id="PR00068">
    <property type="entry name" value="CUZNDISMTASE"/>
</dbReference>
<dbReference type="SUPFAM" id="SSF49329">
    <property type="entry name" value="Cu,Zn superoxide dismutase-like"/>
    <property type="match status" value="1"/>
</dbReference>
<dbReference type="PROSITE" id="PS00087">
    <property type="entry name" value="SOD_CU_ZN_1"/>
    <property type="match status" value="1"/>
</dbReference>
<dbReference type="PROSITE" id="PS00332">
    <property type="entry name" value="SOD_CU_ZN_2"/>
    <property type="match status" value="1"/>
</dbReference>
<keyword id="KW-0007">Acetylation</keyword>
<keyword id="KW-0049">Antioxidant</keyword>
<keyword id="KW-0186">Copper</keyword>
<keyword id="KW-0963">Cytoplasm</keyword>
<keyword id="KW-1015">Disulfide bond</keyword>
<keyword id="KW-0449">Lipoprotein</keyword>
<keyword id="KW-0479">Metal-binding</keyword>
<keyword id="KW-0539">Nucleus</keyword>
<keyword id="KW-0560">Oxidoreductase</keyword>
<keyword id="KW-0564">Palmitate</keyword>
<keyword id="KW-0597">Phosphoprotein</keyword>
<keyword id="KW-0862">Zinc</keyword>
<gene>
    <name evidence="2" type="primary">SOD1</name>
</gene>
<evidence type="ECO:0000250" key="1"/>
<evidence type="ECO:0000250" key="2">
    <source>
        <dbReference type="UniProtKB" id="P00441"/>
    </source>
</evidence>
<evidence type="ECO:0000250" key="3">
    <source>
        <dbReference type="UniProtKB" id="P00442"/>
    </source>
</evidence>
<evidence type="ECO:0000250" key="4">
    <source>
        <dbReference type="UniProtKB" id="P07632"/>
    </source>
</evidence>
<evidence type="ECO:0000250" key="5">
    <source>
        <dbReference type="UniProtKB" id="P08228"/>
    </source>
</evidence>
<evidence type="ECO:0000305" key="6"/>
<name>SODC_MACFU</name>
<comment type="function">
    <text>Destroys radicals which are normally produced within the cells and which are toxic to biological systems.</text>
</comment>
<comment type="catalytic activity">
    <reaction>
        <text>2 superoxide + 2 H(+) = H2O2 + O2</text>
        <dbReference type="Rhea" id="RHEA:20696"/>
        <dbReference type="ChEBI" id="CHEBI:15378"/>
        <dbReference type="ChEBI" id="CHEBI:15379"/>
        <dbReference type="ChEBI" id="CHEBI:16240"/>
        <dbReference type="ChEBI" id="CHEBI:18421"/>
        <dbReference type="EC" id="1.15.1.1"/>
    </reaction>
</comment>
<comment type="cofactor">
    <cofactor evidence="1">
        <name>Cu cation</name>
        <dbReference type="ChEBI" id="CHEBI:23378"/>
    </cofactor>
    <text evidence="1">Binds 1 copper ion per subunit.</text>
</comment>
<comment type="cofactor">
    <cofactor evidence="1">
        <name>Zn(2+)</name>
        <dbReference type="ChEBI" id="CHEBI:29105"/>
    </cofactor>
    <text evidence="1">Binds 1 zinc ion per subunit.</text>
</comment>
<comment type="subunit">
    <text evidence="2 5">Homodimer; non-disulfide-linked (By similarity). Heterodimer with SOD1. The heterodimer CCS:SOD1 interacts with SLC31A1; this heterotrimer is Cu(1+)-mediated and its maintenance is regulated through SOD1 activation (By similarity).</text>
</comment>
<comment type="subcellular location">
    <subcellularLocation>
        <location evidence="1">Cytoplasm</location>
    </subcellularLocation>
    <subcellularLocation>
        <location evidence="1">Nucleus</location>
    </subcellularLocation>
</comment>
<comment type="PTM">
    <text evidence="1">Palmitoylation helps nuclear targeting and decreases catalytic activity.</text>
</comment>
<comment type="PTM">
    <text evidence="2">Succinylation, adjacent to copper catalytic site, probably inhibits activity. Desuccinylation by SIRT5 enhances activity.</text>
</comment>
<comment type="similarity">
    <text evidence="6">Belongs to the Cu-Zn superoxide dismutase family.</text>
</comment>
<protein>
    <recommendedName>
        <fullName evidence="2">Superoxide dismutase [Cu-Zn]</fullName>
        <ecNumber evidence="2">1.15.1.1</ecNumber>
    </recommendedName>
</protein>
<sequence>MAMKAVCVLKGDSPVQGTINFEQKESNGPVKVWGSITGLTEGLHGFHVHQFGDNTQGCTSAGPHFNPLSRQHGGPKDEERHVGDLGNVTAGKDGVAKVSFEDSVISLSGDHSIIGRTLVVHEKADDLGKGGNEESKKTGNAGGRLACGVIGIAQ</sequence>
<organism>
    <name type="scientific">Macaca fuscata fuscata</name>
    <name type="common">Japanese macaque</name>
    <dbReference type="NCBI Taxonomy" id="9543"/>
    <lineage>
        <taxon>Eukaryota</taxon>
        <taxon>Metazoa</taxon>
        <taxon>Chordata</taxon>
        <taxon>Craniata</taxon>
        <taxon>Vertebrata</taxon>
        <taxon>Euteleostomi</taxon>
        <taxon>Mammalia</taxon>
        <taxon>Eutheria</taxon>
        <taxon>Euarchontoglires</taxon>
        <taxon>Primates</taxon>
        <taxon>Haplorrhini</taxon>
        <taxon>Catarrhini</taxon>
        <taxon>Cercopithecidae</taxon>
        <taxon>Cercopithecinae</taxon>
        <taxon>Macaca</taxon>
    </lineage>
</organism>